<protein>
    <recommendedName>
        <fullName>Troponin T, cardiac muscle</fullName>
        <shortName>TnTc</shortName>
    </recommendedName>
    <alternativeName>
        <fullName>Cardiac muscle troponin T</fullName>
        <shortName>cTnT</shortName>
    </alternativeName>
</protein>
<gene>
    <name type="primary">TNNT2</name>
</gene>
<sequence>MSDVEETVDEYEEQEEAAVEEHEESVEEEAGGEARQGGGASAAEDGEEEEGREAEDGPVEESKPQAPGPFMPNLVPPKIPDGERVDFDDIHRKRMEKDLNELQTLIEAHFENRKKEEEELVSLKDRIEKRRAERAEQQRIRTEREKERQARLAEERARREEEESRRKAEDEARKKKALSNMMHFGGYIQKAQAERKSGKRQTEREKKKKILAERRKVLAIDHLNEDQLREKARELWQSIYDLEAEKFDLQEKFKQQKYEINVLRNRVNDNQKVSKTRGKAKVTGRWK</sequence>
<comment type="function">
    <text>Troponin T is the tropomyosin-binding subunit of troponin, the thin filament regulatory complex which confers calcium-sensitivity to striated muscle actomyosin ATPase activity.</text>
</comment>
<comment type="developmental stage">
    <text>Expressed from midgestation to adult life.</text>
</comment>
<comment type="PTM">
    <text evidence="1">Phosphorylation at Thr-202 by PRKCA induces significant reduction in myofilament calcium sensitivity and actomyosin ATPase activity.</text>
</comment>
<comment type="similarity">
    <text evidence="6">Belongs to the troponin T family.</text>
</comment>
<organism>
    <name type="scientific">Ovis aries</name>
    <name type="common">Sheep</name>
    <dbReference type="NCBI Taxonomy" id="9940"/>
    <lineage>
        <taxon>Eukaryota</taxon>
        <taxon>Metazoa</taxon>
        <taxon>Chordata</taxon>
        <taxon>Craniata</taxon>
        <taxon>Vertebrata</taxon>
        <taxon>Euteleostomi</taxon>
        <taxon>Mammalia</taxon>
        <taxon>Eutheria</taxon>
        <taxon>Laurasiatheria</taxon>
        <taxon>Artiodactyla</taxon>
        <taxon>Ruminantia</taxon>
        <taxon>Pecora</taxon>
        <taxon>Bovidae</taxon>
        <taxon>Caprinae</taxon>
        <taxon>Ovis</taxon>
    </lineage>
</organism>
<reference key="1">
    <citation type="journal article" date="1991" name="Pediatr. Res.">
        <title>Troponin T expression in normal and pressure-loaded fetal sheep heart.</title>
        <authorList>
            <person name="McAuliffe J.J."/>
            <person name="Robbins J."/>
        </authorList>
    </citation>
    <scope>NUCLEOTIDE SEQUENCE</scope>
    <source>
        <tissue>Fetal heart</tissue>
    </source>
</reference>
<keyword id="KW-0007">Acetylation</keyword>
<keyword id="KW-0514">Muscle protein</keyword>
<keyword id="KW-0597">Phosphoprotein</keyword>
<keyword id="KW-1185">Reference proteome</keyword>
<proteinExistence type="evidence at transcript level"/>
<evidence type="ECO:0000250" key="1"/>
<evidence type="ECO:0000250" key="2">
    <source>
        <dbReference type="UniProtKB" id="P09741"/>
    </source>
</evidence>
<evidence type="ECO:0000250" key="3">
    <source>
        <dbReference type="UniProtKB" id="P13789"/>
    </source>
</evidence>
<evidence type="ECO:0000250" key="4">
    <source>
        <dbReference type="UniProtKB" id="P50752"/>
    </source>
</evidence>
<evidence type="ECO:0000256" key="5">
    <source>
        <dbReference type="SAM" id="MobiDB-lite"/>
    </source>
</evidence>
<evidence type="ECO:0000305" key="6"/>
<accession>P50751</accession>
<dbReference type="Proteomes" id="UP000002356">
    <property type="component" value="Unplaced"/>
</dbReference>
<dbReference type="GO" id="GO:0005861">
    <property type="term" value="C:troponin complex"/>
    <property type="evidence" value="ECO:0007669"/>
    <property type="project" value="InterPro"/>
</dbReference>
<dbReference type="GO" id="GO:0005523">
    <property type="term" value="F:tropomyosin binding"/>
    <property type="evidence" value="ECO:0007669"/>
    <property type="project" value="TreeGrafter"/>
</dbReference>
<dbReference type="GO" id="GO:0030172">
    <property type="term" value="F:troponin C binding"/>
    <property type="evidence" value="ECO:0007669"/>
    <property type="project" value="TreeGrafter"/>
</dbReference>
<dbReference type="GO" id="GO:0031013">
    <property type="term" value="F:troponin I binding"/>
    <property type="evidence" value="ECO:0007669"/>
    <property type="project" value="TreeGrafter"/>
</dbReference>
<dbReference type="GO" id="GO:0060048">
    <property type="term" value="P:cardiac muscle contraction"/>
    <property type="evidence" value="ECO:0007669"/>
    <property type="project" value="TreeGrafter"/>
</dbReference>
<dbReference type="GO" id="GO:0006937">
    <property type="term" value="P:regulation of muscle contraction"/>
    <property type="evidence" value="ECO:0007669"/>
    <property type="project" value="InterPro"/>
</dbReference>
<dbReference type="GO" id="GO:0045214">
    <property type="term" value="P:sarcomere organization"/>
    <property type="evidence" value="ECO:0007669"/>
    <property type="project" value="TreeGrafter"/>
</dbReference>
<dbReference type="FunFam" id="1.20.5.350:FF:000001">
    <property type="entry name" value="Troponin T, fast skeletal muscle"/>
    <property type="match status" value="1"/>
</dbReference>
<dbReference type="Gene3D" id="1.20.5.350">
    <property type="match status" value="1"/>
</dbReference>
<dbReference type="InterPro" id="IPR027707">
    <property type="entry name" value="TNNT"/>
</dbReference>
<dbReference type="InterPro" id="IPR001978">
    <property type="entry name" value="Troponin"/>
</dbReference>
<dbReference type="InterPro" id="IPR038077">
    <property type="entry name" value="Troponin_sf"/>
</dbReference>
<dbReference type="PANTHER" id="PTHR11521">
    <property type="entry name" value="TROPONIN T"/>
    <property type="match status" value="1"/>
</dbReference>
<dbReference type="PANTHER" id="PTHR11521:SF5">
    <property type="entry name" value="TROPONIN T, CARDIAC MUSCLE"/>
    <property type="match status" value="1"/>
</dbReference>
<dbReference type="Pfam" id="PF00992">
    <property type="entry name" value="Troponin"/>
    <property type="match status" value="2"/>
</dbReference>
<dbReference type="SUPFAM" id="SSF90250">
    <property type="entry name" value="Troponin coil-coiled subunits"/>
    <property type="match status" value="1"/>
</dbReference>
<name>TNNT2_SHEEP</name>
<feature type="initiator methionine" description="Removed" evidence="2">
    <location>
        <position position="1"/>
    </location>
</feature>
<feature type="chain" id="PRO_0000186177" description="Troponin T, cardiac muscle">
    <location>
        <begin position="2"/>
        <end position="287"/>
    </location>
</feature>
<feature type="region of interest" description="Disordered" evidence="5">
    <location>
        <begin position="1"/>
        <end position="85"/>
    </location>
</feature>
<feature type="region of interest" description="Disordered" evidence="5">
    <location>
        <begin position="124"/>
        <end position="208"/>
    </location>
</feature>
<feature type="compositionally biased region" description="Acidic residues" evidence="5">
    <location>
        <begin position="1"/>
        <end position="31"/>
    </location>
</feature>
<feature type="compositionally biased region" description="Acidic residues" evidence="5">
    <location>
        <begin position="44"/>
        <end position="59"/>
    </location>
</feature>
<feature type="compositionally biased region" description="Pro residues" evidence="5">
    <location>
        <begin position="66"/>
        <end position="79"/>
    </location>
</feature>
<feature type="compositionally biased region" description="Basic and acidic residues" evidence="5">
    <location>
        <begin position="124"/>
        <end position="173"/>
    </location>
</feature>
<feature type="compositionally biased region" description="Basic and acidic residues" evidence="5">
    <location>
        <begin position="192"/>
        <end position="208"/>
    </location>
</feature>
<feature type="modified residue" description="N-acetylserine" evidence="2">
    <location>
        <position position="2"/>
    </location>
</feature>
<feature type="modified residue" description="Phosphoserine; by CK2" evidence="3">
    <location>
        <position position="2"/>
    </location>
</feature>
<feature type="modified residue" description="Phosphoserine; by PKC/PRKCA" evidence="4">
    <location>
        <position position="197"/>
    </location>
</feature>
<feature type="modified residue" description="Phosphothreonine; by PKC/PRKCA and RAF1" evidence="3">
    <location>
        <position position="202"/>
    </location>
</feature>
<feature type="modified residue" description="Phosphothreonine; by PKC/PRKCA" evidence="3">
    <location>
        <position position="283"/>
    </location>
</feature>